<feature type="chain" id="PRO_0000259143" description="HTH-type transcriptional regulator SarX">
    <location>
        <begin position="1"/>
        <end position="119"/>
    </location>
</feature>
<feature type="DNA-binding region" description="H-T-H motif" evidence="2">
    <location>
        <begin position="55"/>
        <end position="78"/>
    </location>
</feature>
<comment type="function">
    <text evidence="1">Involved in the regulation of virulence genes. Acts as a repressor of the agr locus and consequently targets genes regulated by the agr system such as sspA, hla and hlb. Binds directly to the agr promoter region (By similarity).</text>
</comment>
<comment type="subcellular location">
    <subcellularLocation>
        <location evidence="1">Cytoplasm</location>
    </subcellularLocation>
</comment>
<comment type="similarity">
    <text evidence="3">Belongs to the SarA family.</text>
</comment>
<comment type="sequence caution" evidence="3">
    <conflict type="erroneous initiation">
        <sequence resource="EMBL-CDS" id="CAG42409"/>
    </conflict>
</comment>
<organism>
    <name type="scientific">Staphylococcus aureus (strain MSSA476)</name>
    <dbReference type="NCBI Taxonomy" id="282459"/>
    <lineage>
        <taxon>Bacteria</taxon>
        <taxon>Bacillati</taxon>
        <taxon>Bacillota</taxon>
        <taxon>Bacilli</taxon>
        <taxon>Bacillales</taxon>
        <taxon>Staphylococcaceae</taxon>
        <taxon>Staphylococcus</taxon>
    </lineage>
</organism>
<dbReference type="EMBL" id="BX571857">
    <property type="protein sequence ID" value="CAG42409.1"/>
    <property type="status" value="ALT_INIT"/>
    <property type="molecule type" value="Genomic_DNA"/>
</dbReference>
<dbReference type="RefSeq" id="WP_001090985.1">
    <property type="nucleotide sequence ID" value="NC_002953.3"/>
</dbReference>
<dbReference type="SMR" id="Q6GBG2"/>
<dbReference type="KEGG" id="sas:SAS0633"/>
<dbReference type="HOGENOM" id="CLU_166896_0_0_9"/>
<dbReference type="GO" id="GO:0005737">
    <property type="term" value="C:cytoplasm"/>
    <property type="evidence" value="ECO:0007669"/>
    <property type="project" value="UniProtKB-SubCell"/>
</dbReference>
<dbReference type="GO" id="GO:0003677">
    <property type="term" value="F:DNA binding"/>
    <property type="evidence" value="ECO:0007669"/>
    <property type="project" value="UniProtKB-KW"/>
</dbReference>
<dbReference type="GO" id="GO:0006355">
    <property type="term" value="P:regulation of DNA-templated transcription"/>
    <property type="evidence" value="ECO:0007669"/>
    <property type="project" value="InterPro"/>
</dbReference>
<dbReference type="Gene3D" id="1.10.10.10">
    <property type="entry name" value="Winged helix-like DNA-binding domain superfamily/Winged helix DNA-binding domain"/>
    <property type="match status" value="1"/>
</dbReference>
<dbReference type="InterPro" id="IPR010166">
    <property type="entry name" value="SarA/Rot_dom"/>
</dbReference>
<dbReference type="InterPro" id="IPR055166">
    <property type="entry name" value="Transc_reg_Sar_Rot_HTH"/>
</dbReference>
<dbReference type="InterPro" id="IPR036388">
    <property type="entry name" value="WH-like_DNA-bd_sf"/>
</dbReference>
<dbReference type="InterPro" id="IPR036390">
    <property type="entry name" value="WH_DNA-bd_sf"/>
</dbReference>
<dbReference type="NCBIfam" id="TIGR01889">
    <property type="entry name" value="Staph_reg_Sar"/>
    <property type="match status" value="1"/>
</dbReference>
<dbReference type="Pfam" id="PF22381">
    <property type="entry name" value="Staph_reg_Sar_Rot"/>
    <property type="match status" value="1"/>
</dbReference>
<dbReference type="SUPFAM" id="SSF46785">
    <property type="entry name" value="Winged helix' DNA-binding domain"/>
    <property type="match status" value="1"/>
</dbReference>
<keyword id="KW-0963">Cytoplasm</keyword>
<keyword id="KW-0238">DNA-binding</keyword>
<keyword id="KW-0678">Repressor</keyword>
<keyword id="KW-0804">Transcription</keyword>
<keyword id="KW-0805">Transcription regulation</keyword>
<keyword id="KW-0843">Virulence</keyword>
<evidence type="ECO:0000250" key="1"/>
<evidence type="ECO:0000255" key="2"/>
<evidence type="ECO:0000305" key="3"/>
<gene>
    <name type="primary">sarX</name>
    <name type="ordered locus">SAS0633</name>
</gene>
<proteinExistence type="inferred from homology"/>
<accession>Q6GBG2</accession>
<protein>
    <recommendedName>
        <fullName>HTH-type transcriptional regulator SarX</fullName>
    </recommendedName>
    <alternativeName>
        <fullName>Staphylococcal accessory regulator X</fullName>
    </alternativeName>
</protein>
<name>SARX_STAAS</name>
<sequence length="119" mass="14179">MNTEKLETLLGFYKQYKALSEYIDKKYKLSLNDLAVLDLTMKHCKDEKVLMQSFLKTAMDELDLSRTKLLVSIRRLIEKERLSKVRSSKDERKIYIYLNNDDISKFNALFEDVEQFLNI</sequence>
<reference key="1">
    <citation type="journal article" date="2004" name="Proc. Natl. Acad. Sci. U.S.A.">
        <title>Complete genomes of two clinical Staphylococcus aureus strains: evidence for the rapid evolution of virulence and drug resistance.</title>
        <authorList>
            <person name="Holden M.T.G."/>
            <person name="Feil E.J."/>
            <person name="Lindsay J.A."/>
            <person name="Peacock S.J."/>
            <person name="Day N.P.J."/>
            <person name="Enright M.C."/>
            <person name="Foster T.J."/>
            <person name="Moore C.E."/>
            <person name="Hurst L."/>
            <person name="Atkin R."/>
            <person name="Barron A."/>
            <person name="Bason N."/>
            <person name="Bentley S.D."/>
            <person name="Chillingworth C."/>
            <person name="Chillingworth T."/>
            <person name="Churcher C."/>
            <person name="Clark L."/>
            <person name="Corton C."/>
            <person name="Cronin A."/>
            <person name="Doggett J."/>
            <person name="Dowd L."/>
            <person name="Feltwell T."/>
            <person name="Hance Z."/>
            <person name="Harris B."/>
            <person name="Hauser H."/>
            <person name="Holroyd S."/>
            <person name="Jagels K."/>
            <person name="James K.D."/>
            <person name="Lennard N."/>
            <person name="Line A."/>
            <person name="Mayes R."/>
            <person name="Moule S."/>
            <person name="Mungall K."/>
            <person name="Ormond D."/>
            <person name="Quail M.A."/>
            <person name="Rabbinowitsch E."/>
            <person name="Rutherford K.M."/>
            <person name="Sanders M."/>
            <person name="Sharp S."/>
            <person name="Simmonds M."/>
            <person name="Stevens K."/>
            <person name="Whitehead S."/>
            <person name="Barrell B.G."/>
            <person name="Spratt B.G."/>
            <person name="Parkhill J."/>
        </authorList>
    </citation>
    <scope>NUCLEOTIDE SEQUENCE [LARGE SCALE GENOMIC DNA]</scope>
    <source>
        <strain>MSSA476</strain>
    </source>
</reference>